<feature type="chain" id="PRO_0000331827" description="Methionine--tRNA ligase">
    <location>
        <begin position="1"/>
        <end position="674"/>
    </location>
</feature>
<feature type="domain" description="tRNA-binding" evidence="1">
    <location>
        <begin position="574"/>
        <end position="674"/>
    </location>
</feature>
<feature type="short sequence motif" description="'HIGH' region">
    <location>
        <begin position="11"/>
        <end position="21"/>
    </location>
</feature>
<feature type="short sequence motif" description="'KMSKS' region">
    <location>
        <begin position="330"/>
        <end position="334"/>
    </location>
</feature>
<feature type="binding site" evidence="1">
    <location>
        <position position="142"/>
    </location>
    <ligand>
        <name>Zn(2+)</name>
        <dbReference type="ChEBI" id="CHEBI:29105"/>
    </ligand>
</feature>
<feature type="binding site" evidence="1">
    <location>
        <position position="145"/>
    </location>
    <ligand>
        <name>Zn(2+)</name>
        <dbReference type="ChEBI" id="CHEBI:29105"/>
    </ligand>
</feature>
<feature type="binding site" evidence="1">
    <location>
        <position position="155"/>
    </location>
    <ligand>
        <name>Zn(2+)</name>
        <dbReference type="ChEBI" id="CHEBI:29105"/>
    </ligand>
</feature>
<feature type="binding site" evidence="1">
    <location>
        <position position="158"/>
    </location>
    <ligand>
        <name>Zn(2+)</name>
        <dbReference type="ChEBI" id="CHEBI:29105"/>
    </ligand>
</feature>
<feature type="binding site" evidence="1">
    <location>
        <position position="333"/>
    </location>
    <ligand>
        <name>ATP</name>
        <dbReference type="ChEBI" id="CHEBI:30616"/>
    </ligand>
</feature>
<keyword id="KW-0030">Aminoacyl-tRNA synthetase</keyword>
<keyword id="KW-0067">ATP-binding</keyword>
<keyword id="KW-0963">Cytoplasm</keyword>
<keyword id="KW-0436">Ligase</keyword>
<keyword id="KW-0479">Metal-binding</keyword>
<keyword id="KW-0547">Nucleotide-binding</keyword>
<keyword id="KW-0648">Protein biosynthesis</keyword>
<keyword id="KW-0694">RNA-binding</keyword>
<keyword id="KW-0820">tRNA-binding</keyword>
<keyword id="KW-0862">Zinc</keyword>
<dbReference type="EC" id="6.1.1.10" evidence="1"/>
<dbReference type="EMBL" id="CP000437">
    <property type="protein sequence ID" value="ABI82426.1"/>
    <property type="molecule type" value="Genomic_DNA"/>
</dbReference>
<dbReference type="RefSeq" id="WP_011648592.1">
    <property type="nucleotide sequence ID" value="NC_017463.1"/>
</dbReference>
<dbReference type="SMR" id="Q0BNA8"/>
<dbReference type="KEGG" id="fth:FTH_0437"/>
<dbReference type="GO" id="GO:0005829">
    <property type="term" value="C:cytosol"/>
    <property type="evidence" value="ECO:0007669"/>
    <property type="project" value="TreeGrafter"/>
</dbReference>
<dbReference type="GO" id="GO:0005524">
    <property type="term" value="F:ATP binding"/>
    <property type="evidence" value="ECO:0007669"/>
    <property type="project" value="UniProtKB-UniRule"/>
</dbReference>
<dbReference type="GO" id="GO:0046872">
    <property type="term" value="F:metal ion binding"/>
    <property type="evidence" value="ECO:0007669"/>
    <property type="project" value="UniProtKB-KW"/>
</dbReference>
<dbReference type="GO" id="GO:0004825">
    <property type="term" value="F:methionine-tRNA ligase activity"/>
    <property type="evidence" value="ECO:0007669"/>
    <property type="project" value="UniProtKB-UniRule"/>
</dbReference>
<dbReference type="GO" id="GO:0000049">
    <property type="term" value="F:tRNA binding"/>
    <property type="evidence" value="ECO:0007669"/>
    <property type="project" value="UniProtKB-KW"/>
</dbReference>
<dbReference type="GO" id="GO:0006431">
    <property type="term" value="P:methionyl-tRNA aminoacylation"/>
    <property type="evidence" value="ECO:0007669"/>
    <property type="project" value="UniProtKB-UniRule"/>
</dbReference>
<dbReference type="CDD" id="cd07957">
    <property type="entry name" value="Anticodon_Ia_Met"/>
    <property type="match status" value="1"/>
</dbReference>
<dbReference type="CDD" id="cd00814">
    <property type="entry name" value="MetRS_core"/>
    <property type="match status" value="1"/>
</dbReference>
<dbReference type="CDD" id="cd02800">
    <property type="entry name" value="tRNA_bind_EcMetRS_like"/>
    <property type="match status" value="1"/>
</dbReference>
<dbReference type="FunFam" id="1.10.730.10:FF:000005">
    <property type="entry name" value="Methionine--tRNA ligase"/>
    <property type="match status" value="1"/>
</dbReference>
<dbReference type="FunFam" id="2.20.28.20:FF:000001">
    <property type="entry name" value="Methionine--tRNA ligase"/>
    <property type="match status" value="1"/>
</dbReference>
<dbReference type="FunFam" id="2.40.50.140:FF:000042">
    <property type="entry name" value="Methionine--tRNA ligase"/>
    <property type="match status" value="1"/>
</dbReference>
<dbReference type="Gene3D" id="3.40.50.620">
    <property type="entry name" value="HUPs"/>
    <property type="match status" value="1"/>
</dbReference>
<dbReference type="Gene3D" id="1.10.730.10">
    <property type="entry name" value="Isoleucyl-tRNA Synthetase, Domain 1"/>
    <property type="match status" value="1"/>
</dbReference>
<dbReference type="Gene3D" id="2.20.28.20">
    <property type="entry name" value="Methionyl-tRNA synthetase, Zn-domain"/>
    <property type="match status" value="1"/>
</dbReference>
<dbReference type="Gene3D" id="2.40.50.140">
    <property type="entry name" value="Nucleic acid-binding proteins"/>
    <property type="match status" value="1"/>
</dbReference>
<dbReference type="HAMAP" id="MF_00098">
    <property type="entry name" value="Met_tRNA_synth_type1"/>
    <property type="match status" value="1"/>
</dbReference>
<dbReference type="InterPro" id="IPR001412">
    <property type="entry name" value="aa-tRNA-synth_I_CS"/>
</dbReference>
<dbReference type="InterPro" id="IPR041872">
    <property type="entry name" value="Anticodon_Met"/>
</dbReference>
<dbReference type="InterPro" id="IPR004495">
    <property type="entry name" value="Met-tRNA-synth_bsu_C"/>
</dbReference>
<dbReference type="InterPro" id="IPR023458">
    <property type="entry name" value="Met-tRNA_ligase_1"/>
</dbReference>
<dbReference type="InterPro" id="IPR014758">
    <property type="entry name" value="Met-tRNA_synth"/>
</dbReference>
<dbReference type="InterPro" id="IPR015413">
    <property type="entry name" value="Methionyl/Leucyl_tRNA_Synth"/>
</dbReference>
<dbReference type="InterPro" id="IPR033911">
    <property type="entry name" value="MetRS_core"/>
</dbReference>
<dbReference type="InterPro" id="IPR029038">
    <property type="entry name" value="MetRS_Zn"/>
</dbReference>
<dbReference type="InterPro" id="IPR012340">
    <property type="entry name" value="NA-bd_OB-fold"/>
</dbReference>
<dbReference type="InterPro" id="IPR014729">
    <property type="entry name" value="Rossmann-like_a/b/a_fold"/>
</dbReference>
<dbReference type="InterPro" id="IPR002547">
    <property type="entry name" value="tRNA-bd_dom"/>
</dbReference>
<dbReference type="InterPro" id="IPR009080">
    <property type="entry name" value="tRNAsynth_Ia_anticodon-bd"/>
</dbReference>
<dbReference type="NCBIfam" id="TIGR00398">
    <property type="entry name" value="metG"/>
    <property type="match status" value="1"/>
</dbReference>
<dbReference type="NCBIfam" id="TIGR00399">
    <property type="entry name" value="metG_C_term"/>
    <property type="match status" value="1"/>
</dbReference>
<dbReference type="NCBIfam" id="NF001100">
    <property type="entry name" value="PRK00133.1"/>
    <property type="match status" value="1"/>
</dbReference>
<dbReference type="PANTHER" id="PTHR45765">
    <property type="entry name" value="METHIONINE--TRNA LIGASE"/>
    <property type="match status" value="1"/>
</dbReference>
<dbReference type="PANTHER" id="PTHR45765:SF1">
    <property type="entry name" value="METHIONINE--TRNA LIGASE, CYTOPLASMIC"/>
    <property type="match status" value="1"/>
</dbReference>
<dbReference type="Pfam" id="PF09334">
    <property type="entry name" value="tRNA-synt_1g"/>
    <property type="match status" value="1"/>
</dbReference>
<dbReference type="Pfam" id="PF01588">
    <property type="entry name" value="tRNA_bind"/>
    <property type="match status" value="1"/>
</dbReference>
<dbReference type="PRINTS" id="PR01041">
    <property type="entry name" value="TRNASYNTHMET"/>
</dbReference>
<dbReference type="SUPFAM" id="SSF47323">
    <property type="entry name" value="Anticodon-binding domain of a subclass of class I aminoacyl-tRNA synthetases"/>
    <property type="match status" value="1"/>
</dbReference>
<dbReference type="SUPFAM" id="SSF57770">
    <property type="entry name" value="Methionyl-tRNA synthetase (MetRS), Zn-domain"/>
    <property type="match status" value="1"/>
</dbReference>
<dbReference type="SUPFAM" id="SSF50249">
    <property type="entry name" value="Nucleic acid-binding proteins"/>
    <property type="match status" value="1"/>
</dbReference>
<dbReference type="SUPFAM" id="SSF52374">
    <property type="entry name" value="Nucleotidylyl transferase"/>
    <property type="match status" value="1"/>
</dbReference>
<dbReference type="PROSITE" id="PS00178">
    <property type="entry name" value="AA_TRNA_LIGASE_I"/>
    <property type="match status" value="1"/>
</dbReference>
<dbReference type="PROSITE" id="PS50886">
    <property type="entry name" value="TRBD"/>
    <property type="match status" value="1"/>
</dbReference>
<reference key="1">
    <citation type="journal article" date="2006" name="J. Bacteriol.">
        <title>Chromosome rearrangement and diversification of Francisella tularensis revealed by the type B (OSU18) genome sequence.</title>
        <authorList>
            <person name="Petrosino J.F."/>
            <person name="Xiang Q."/>
            <person name="Karpathy S.E."/>
            <person name="Jiang H."/>
            <person name="Yerrapragada S."/>
            <person name="Liu Y."/>
            <person name="Gioia J."/>
            <person name="Hemphill L."/>
            <person name="Gonzalez A."/>
            <person name="Raghavan T.M."/>
            <person name="Uzman A."/>
            <person name="Fox G.E."/>
            <person name="Highlander S."/>
            <person name="Reichard M."/>
            <person name="Morton R.J."/>
            <person name="Clinkenbeard K.D."/>
            <person name="Weinstock G.M."/>
        </authorList>
    </citation>
    <scope>NUCLEOTIDE SEQUENCE [LARGE SCALE GENOMIC DNA]</scope>
    <source>
        <strain>OSU18</strain>
    </source>
</reference>
<evidence type="ECO:0000255" key="1">
    <source>
        <dbReference type="HAMAP-Rule" id="MF_00098"/>
    </source>
</evidence>
<accession>Q0BNA8</accession>
<organism>
    <name type="scientific">Francisella tularensis subsp. holarctica (strain OSU18)</name>
    <dbReference type="NCBI Taxonomy" id="393011"/>
    <lineage>
        <taxon>Bacteria</taxon>
        <taxon>Pseudomonadati</taxon>
        <taxon>Pseudomonadota</taxon>
        <taxon>Gammaproteobacteria</taxon>
        <taxon>Thiotrichales</taxon>
        <taxon>Francisellaceae</taxon>
        <taxon>Francisella</taxon>
    </lineage>
</organism>
<sequence length="674" mass="76575">MRKILVTNALPYANGDLHLGHMLGYIQSDIWVRFQKLQGNQCIFICGSDTHGTPIMLKAKSLGITPEELVTKYSNRHLQDFTDFEINFDNYHSTHNSLNKEIVEDIYNKLNNKNLISKKAIAQAYDPEAKMFLPDRFVKGTCPKCKAEDQYGDSCEVCGATYDPTELINPRSVISGQSPIQKNSEHFFFDLPALEKNIKDWIESNTLLQPEVANKLAEWFEQGLQSWDISRDAPYFGFAIPGTNEQKFFYVWLDAPMGYIASFKDYCNKNNINFGDFWGDSSSESELYHFIGKDIIYFHALFWPAILSSTGYKTPTSVFANGFLTVNGKKMSKSRGTFIQARTYLDNLEPSYLRYYFASRLTSRIDDIDLNLEEFVTKSNSDIVGKVVNIASRCAGFIYKKFDATLSGEIFDPELESEFSKNHDAITQAFEKREFAHAVRLIMALADKANQFIDYHKPWQLAKEEGQEQKVHQVCSQGINMFKVLIAYLKPIIPSIVAEAERFLNIQFISWADAPKFLINHKIDKFKPLATRIEKEKVDKILEDTKKMFENEQAPQSKKEEPKLDIAAECTFDDFMKVDLRIAKITEASHVEGADKLLKLILDLGGVTKQVFAGIKSAYKPEDLIGKHTIMVANLAPRKMKFGMSEGMVLAAGDGKGIYILEPHEGAQPGMRVK</sequence>
<proteinExistence type="inferred from homology"/>
<name>SYM_FRATO</name>
<gene>
    <name evidence="1" type="primary">metG</name>
    <name type="ordered locus">FTH_0437</name>
</gene>
<comment type="function">
    <text evidence="1">Is required not only for elongation of protein synthesis but also for the initiation of all mRNA translation through initiator tRNA(fMet) aminoacylation.</text>
</comment>
<comment type="catalytic activity">
    <reaction evidence="1">
        <text>tRNA(Met) + L-methionine + ATP = L-methionyl-tRNA(Met) + AMP + diphosphate</text>
        <dbReference type="Rhea" id="RHEA:13481"/>
        <dbReference type="Rhea" id="RHEA-COMP:9667"/>
        <dbReference type="Rhea" id="RHEA-COMP:9698"/>
        <dbReference type="ChEBI" id="CHEBI:30616"/>
        <dbReference type="ChEBI" id="CHEBI:33019"/>
        <dbReference type="ChEBI" id="CHEBI:57844"/>
        <dbReference type="ChEBI" id="CHEBI:78442"/>
        <dbReference type="ChEBI" id="CHEBI:78530"/>
        <dbReference type="ChEBI" id="CHEBI:456215"/>
        <dbReference type="EC" id="6.1.1.10"/>
    </reaction>
</comment>
<comment type="cofactor">
    <cofactor evidence="1">
        <name>Zn(2+)</name>
        <dbReference type="ChEBI" id="CHEBI:29105"/>
    </cofactor>
    <text evidence="1">Binds 1 zinc ion per subunit.</text>
</comment>
<comment type="subunit">
    <text evidence="1">Homodimer.</text>
</comment>
<comment type="subcellular location">
    <subcellularLocation>
        <location evidence="1">Cytoplasm</location>
    </subcellularLocation>
</comment>
<comment type="similarity">
    <text evidence="1">Belongs to the class-I aminoacyl-tRNA synthetase family. MetG type 1 subfamily.</text>
</comment>
<protein>
    <recommendedName>
        <fullName evidence="1">Methionine--tRNA ligase</fullName>
        <ecNumber evidence="1">6.1.1.10</ecNumber>
    </recommendedName>
    <alternativeName>
        <fullName evidence="1">Methionyl-tRNA synthetase</fullName>
        <shortName evidence="1">MetRS</shortName>
    </alternativeName>
</protein>